<dbReference type="EC" id="4.1.1.48" evidence="1"/>
<dbReference type="EMBL" id="CP001215">
    <property type="protein sequence ID" value="ACP15804.1"/>
    <property type="molecule type" value="Genomic_DNA"/>
</dbReference>
<dbReference type="RefSeq" id="WP_000536721.1">
    <property type="nucleotide sequence ID" value="NC_012581.1"/>
</dbReference>
<dbReference type="SMR" id="C3LAW0"/>
<dbReference type="GeneID" id="45021251"/>
<dbReference type="KEGG" id="bah:BAMEG_3339"/>
<dbReference type="HOGENOM" id="CLU_034247_2_0_9"/>
<dbReference type="UniPathway" id="UPA00035">
    <property type="reaction ID" value="UER00043"/>
</dbReference>
<dbReference type="GO" id="GO:0004425">
    <property type="term" value="F:indole-3-glycerol-phosphate synthase activity"/>
    <property type="evidence" value="ECO:0007669"/>
    <property type="project" value="UniProtKB-UniRule"/>
</dbReference>
<dbReference type="GO" id="GO:0004640">
    <property type="term" value="F:phosphoribosylanthranilate isomerase activity"/>
    <property type="evidence" value="ECO:0007669"/>
    <property type="project" value="TreeGrafter"/>
</dbReference>
<dbReference type="GO" id="GO:0000162">
    <property type="term" value="P:L-tryptophan biosynthetic process"/>
    <property type="evidence" value="ECO:0007669"/>
    <property type="project" value="UniProtKB-UniRule"/>
</dbReference>
<dbReference type="CDD" id="cd00331">
    <property type="entry name" value="IGPS"/>
    <property type="match status" value="1"/>
</dbReference>
<dbReference type="FunFam" id="3.20.20.70:FF:000024">
    <property type="entry name" value="Indole-3-glycerol phosphate synthase"/>
    <property type="match status" value="1"/>
</dbReference>
<dbReference type="Gene3D" id="3.20.20.70">
    <property type="entry name" value="Aldolase class I"/>
    <property type="match status" value="1"/>
</dbReference>
<dbReference type="HAMAP" id="MF_00134_B">
    <property type="entry name" value="IGPS_B"/>
    <property type="match status" value="1"/>
</dbReference>
<dbReference type="InterPro" id="IPR013785">
    <property type="entry name" value="Aldolase_TIM"/>
</dbReference>
<dbReference type="InterPro" id="IPR045186">
    <property type="entry name" value="Indole-3-glycerol_P_synth"/>
</dbReference>
<dbReference type="InterPro" id="IPR013798">
    <property type="entry name" value="Indole-3-glycerol_P_synth_dom"/>
</dbReference>
<dbReference type="InterPro" id="IPR001468">
    <property type="entry name" value="Indole-3-GlycerolPSynthase_CS"/>
</dbReference>
<dbReference type="InterPro" id="IPR011060">
    <property type="entry name" value="RibuloseP-bd_barrel"/>
</dbReference>
<dbReference type="NCBIfam" id="NF001371">
    <property type="entry name" value="PRK00278.1-3"/>
    <property type="match status" value="1"/>
</dbReference>
<dbReference type="NCBIfam" id="NF001377">
    <property type="entry name" value="PRK00278.2-4"/>
    <property type="match status" value="1"/>
</dbReference>
<dbReference type="PANTHER" id="PTHR22854:SF2">
    <property type="entry name" value="INDOLE-3-GLYCEROL-PHOSPHATE SYNTHASE"/>
    <property type="match status" value="1"/>
</dbReference>
<dbReference type="PANTHER" id="PTHR22854">
    <property type="entry name" value="TRYPTOPHAN BIOSYNTHESIS PROTEIN"/>
    <property type="match status" value="1"/>
</dbReference>
<dbReference type="Pfam" id="PF00218">
    <property type="entry name" value="IGPS"/>
    <property type="match status" value="1"/>
</dbReference>
<dbReference type="SUPFAM" id="SSF51366">
    <property type="entry name" value="Ribulose-phoshate binding barrel"/>
    <property type="match status" value="1"/>
</dbReference>
<dbReference type="PROSITE" id="PS00614">
    <property type="entry name" value="IGPS"/>
    <property type="match status" value="1"/>
</dbReference>
<reference key="1">
    <citation type="submission" date="2008-10" db="EMBL/GenBank/DDBJ databases">
        <title>Genome sequence of Bacillus anthracis str. CDC 684.</title>
        <authorList>
            <person name="Dodson R.J."/>
            <person name="Munk A.C."/>
            <person name="Brettin T."/>
            <person name="Bruce D."/>
            <person name="Detter C."/>
            <person name="Tapia R."/>
            <person name="Han C."/>
            <person name="Sutton G."/>
            <person name="Sims D."/>
        </authorList>
    </citation>
    <scope>NUCLEOTIDE SEQUENCE [LARGE SCALE GENOMIC DNA]</scope>
    <source>
        <strain>CDC 684 / NRRL 3495</strain>
    </source>
</reference>
<organism>
    <name type="scientific">Bacillus anthracis (strain CDC 684 / NRRL 3495)</name>
    <dbReference type="NCBI Taxonomy" id="568206"/>
    <lineage>
        <taxon>Bacteria</taxon>
        <taxon>Bacillati</taxon>
        <taxon>Bacillota</taxon>
        <taxon>Bacilli</taxon>
        <taxon>Bacillales</taxon>
        <taxon>Bacillaceae</taxon>
        <taxon>Bacillus</taxon>
        <taxon>Bacillus cereus group</taxon>
    </lineage>
</organism>
<comment type="catalytic activity">
    <reaction evidence="1">
        <text>1-(2-carboxyphenylamino)-1-deoxy-D-ribulose 5-phosphate + H(+) = (1S,2R)-1-C-(indol-3-yl)glycerol 3-phosphate + CO2 + H2O</text>
        <dbReference type="Rhea" id="RHEA:23476"/>
        <dbReference type="ChEBI" id="CHEBI:15377"/>
        <dbReference type="ChEBI" id="CHEBI:15378"/>
        <dbReference type="ChEBI" id="CHEBI:16526"/>
        <dbReference type="ChEBI" id="CHEBI:58613"/>
        <dbReference type="ChEBI" id="CHEBI:58866"/>
        <dbReference type="EC" id="4.1.1.48"/>
    </reaction>
</comment>
<comment type="pathway">
    <text evidence="1">Amino-acid biosynthesis; L-tryptophan biosynthesis; L-tryptophan from chorismate: step 4/5.</text>
</comment>
<comment type="similarity">
    <text evidence="1">Belongs to the TrpC family.</text>
</comment>
<gene>
    <name evidence="1" type="primary">trpC</name>
    <name type="ordered locus">BAMEG_3339</name>
</gene>
<sequence>MGTILDKIVNQKKKEVAALYETYTPVKEKRKTRSLVKALEQFTVIAEVKRASPSKGDINLHVDVRKQVKTYEECGAGAVSVLTDGQFFKGSFYDLQTAREESSIPLLCKDFIIDKIQIDRAYEAGADIILLIVAALTKEKLKELYSYVLEKGLEAIVEVHDEQELEIAIQLNPHVIGINNRNLKTFEVDLSQTEKLGKRLNEEKLLWISESGIHSKEDIIRVKRAGAKGVLVGEALMTSSSIHTFFEDCKVNI</sequence>
<name>TRPC_BACAC</name>
<feature type="chain" id="PRO_1000198765" description="Indole-3-glycerol phosphate synthase">
    <location>
        <begin position="1"/>
        <end position="253"/>
    </location>
</feature>
<accession>C3LAW0</accession>
<keyword id="KW-0028">Amino-acid biosynthesis</keyword>
<keyword id="KW-0057">Aromatic amino acid biosynthesis</keyword>
<keyword id="KW-0210">Decarboxylase</keyword>
<keyword id="KW-0456">Lyase</keyword>
<keyword id="KW-0822">Tryptophan biosynthesis</keyword>
<protein>
    <recommendedName>
        <fullName evidence="1">Indole-3-glycerol phosphate synthase</fullName>
        <shortName evidence="1">IGPS</shortName>
        <ecNumber evidence="1">4.1.1.48</ecNumber>
    </recommendedName>
</protein>
<evidence type="ECO:0000255" key="1">
    <source>
        <dbReference type="HAMAP-Rule" id="MF_00134"/>
    </source>
</evidence>
<proteinExistence type="inferred from homology"/>